<protein>
    <recommendedName>
        <fullName evidence="1">Protein GrpE</fullName>
    </recommendedName>
    <alternativeName>
        <fullName evidence="1">HSP-70 cofactor</fullName>
    </alternativeName>
</protein>
<reference key="1">
    <citation type="journal article" date="2010" name="Genome Biol. Evol.">
        <title>Continuing evolution of Burkholderia mallei through genome reduction and large-scale rearrangements.</title>
        <authorList>
            <person name="Losada L."/>
            <person name="Ronning C.M."/>
            <person name="DeShazer D."/>
            <person name="Woods D."/>
            <person name="Fedorova N."/>
            <person name="Kim H.S."/>
            <person name="Shabalina S.A."/>
            <person name="Pearson T.R."/>
            <person name="Brinkac L."/>
            <person name="Tan P."/>
            <person name="Nandi T."/>
            <person name="Crabtree J."/>
            <person name="Badger J."/>
            <person name="Beckstrom-Sternberg S."/>
            <person name="Saqib M."/>
            <person name="Schutzer S.E."/>
            <person name="Keim P."/>
            <person name="Nierman W.C."/>
        </authorList>
    </citation>
    <scope>NUCLEOTIDE SEQUENCE [LARGE SCALE GENOMIC DNA]</scope>
    <source>
        <strain>NCTC 10247</strain>
    </source>
</reference>
<proteinExistence type="inferred from homology"/>
<feature type="chain" id="PRO_1000053552" description="Protein GrpE">
    <location>
        <begin position="1"/>
        <end position="185"/>
    </location>
</feature>
<feature type="region of interest" description="Disordered" evidence="2">
    <location>
        <begin position="1"/>
        <end position="38"/>
    </location>
</feature>
<feature type="compositionally biased region" description="Polar residues" evidence="2">
    <location>
        <begin position="1"/>
        <end position="11"/>
    </location>
</feature>
<feature type="compositionally biased region" description="Low complexity" evidence="2">
    <location>
        <begin position="19"/>
        <end position="38"/>
    </location>
</feature>
<organism>
    <name type="scientific">Burkholderia mallei (strain NCTC 10247)</name>
    <dbReference type="NCBI Taxonomy" id="320389"/>
    <lineage>
        <taxon>Bacteria</taxon>
        <taxon>Pseudomonadati</taxon>
        <taxon>Pseudomonadota</taxon>
        <taxon>Betaproteobacteria</taxon>
        <taxon>Burkholderiales</taxon>
        <taxon>Burkholderiaceae</taxon>
        <taxon>Burkholderia</taxon>
        <taxon>pseudomallei group</taxon>
    </lineage>
</organism>
<sequence>MENTQENPTDQTTEETGREAQAAEPAAQAAENAAPAAEAALAEAQAKIAELQESFLRAKAETENVRRRAQDDVAKAHKFAIEGFAENLLPVLDSLEAAVGDTSGDLAKVREGVELTLRQLTSALEKGRVAALNPVGEKFDPHLHQAISMVPADQEPNTVVAVLQKGYTIADRVLRPALVTVAQPK</sequence>
<accession>A3MNA1</accession>
<name>GRPE_BURM7</name>
<gene>
    <name evidence="1" type="primary">grpE</name>
    <name type="ordered locus">BMA10247_2208</name>
</gene>
<keyword id="KW-0143">Chaperone</keyword>
<keyword id="KW-0963">Cytoplasm</keyword>
<keyword id="KW-0346">Stress response</keyword>
<comment type="function">
    <text evidence="1">Participates actively in the response to hyperosmotic and heat shock by preventing the aggregation of stress-denatured proteins, in association with DnaK and GrpE. It is the nucleotide exchange factor for DnaK and may function as a thermosensor. Unfolded proteins bind initially to DnaJ; upon interaction with the DnaJ-bound protein, DnaK hydrolyzes its bound ATP, resulting in the formation of a stable complex. GrpE releases ADP from DnaK; ATP binding to DnaK triggers the release of the substrate protein, thus completing the reaction cycle. Several rounds of ATP-dependent interactions between DnaJ, DnaK and GrpE are required for fully efficient folding.</text>
</comment>
<comment type="subunit">
    <text evidence="1">Homodimer.</text>
</comment>
<comment type="subcellular location">
    <subcellularLocation>
        <location evidence="1">Cytoplasm</location>
    </subcellularLocation>
</comment>
<comment type="similarity">
    <text evidence="1">Belongs to the GrpE family.</text>
</comment>
<evidence type="ECO:0000255" key="1">
    <source>
        <dbReference type="HAMAP-Rule" id="MF_01151"/>
    </source>
</evidence>
<evidence type="ECO:0000256" key="2">
    <source>
        <dbReference type="SAM" id="MobiDB-lite"/>
    </source>
</evidence>
<dbReference type="EMBL" id="CP000548">
    <property type="protein sequence ID" value="ABO04241.1"/>
    <property type="molecule type" value="Genomic_DNA"/>
</dbReference>
<dbReference type="RefSeq" id="WP_004194243.1">
    <property type="nucleotide sequence ID" value="NZ_CP007802.1"/>
</dbReference>
<dbReference type="SMR" id="A3MNA1"/>
<dbReference type="GeneID" id="93061417"/>
<dbReference type="KEGG" id="bmaz:BM44_1034"/>
<dbReference type="KEGG" id="bmn:BMA10247_2208"/>
<dbReference type="PATRIC" id="fig|320389.8.peg.1155"/>
<dbReference type="GO" id="GO:0005829">
    <property type="term" value="C:cytosol"/>
    <property type="evidence" value="ECO:0007669"/>
    <property type="project" value="TreeGrafter"/>
</dbReference>
<dbReference type="GO" id="GO:0000774">
    <property type="term" value="F:adenyl-nucleotide exchange factor activity"/>
    <property type="evidence" value="ECO:0007669"/>
    <property type="project" value="InterPro"/>
</dbReference>
<dbReference type="GO" id="GO:0042803">
    <property type="term" value="F:protein homodimerization activity"/>
    <property type="evidence" value="ECO:0007669"/>
    <property type="project" value="InterPro"/>
</dbReference>
<dbReference type="GO" id="GO:0051087">
    <property type="term" value="F:protein-folding chaperone binding"/>
    <property type="evidence" value="ECO:0007669"/>
    <property type="project" value="InterPro"/>
</dbReference>
<dbReference type="GO" id="GO:0051082">
    <property type="term" value="F:unfolded protein binding"/>
    <property type="evidence" value="ECO:0007669"/>
    <property type="project" value="TreeGrafter"/>
</dbReference>
<dbReference type="GO" id="GO:0006457">
    <property type="term" value="P:protein folding"/>
    <property type="evidence" value="ECO:0007669"/>
    <property type="project" value="InterPro"/>
</dbReference>
<dbReference type="CDD" id="cd00446">
    <property type="entry name" value="GrpE"/>
    <property type="match status" value="1"/>
</dbReference>
<dbReference type="FunFam" id="2.30.22.10:FF:000001">
    <property type="entry name" value="Protein GrpE"/>
    <property type="match status" value="1"/>
</dbReference>
<dbReference type="Gene3D" id="3.90.20.20">
    <property type="match status" value="1"/>
</dbReference>
<dbReference type="Gene3D" id="2.30.22.10">
    <property type="entry name" value="Head domain of nucleotide exchange factor GrpE"/>
    <property type="match status" value="1"/>
</dbReference>
<dbReference type="HAMAP" id="MF_01151">
    <property type="entry name" value="GrpE"/>
    <property type="match status" value="1"/>
</dbReference>
<dbReference type="InterPro" id="IPR000740">
    <property type="entry name" value="GrpE"/>
</dbReference>
<dbReference type="InterPro" id="IPR013805">
    <property type="entry name" value="GrpE_coiled_coil"/>
</dbReference>
<dbReference type="InterPro" id="IPR009012">
    <property type="entry name" value="GrpE_head"/>
</dbReference>
<dbReference type="NCBIfam" id="NF010737">
    <property type="entry name" value="PRK14139.1"/>
    <property type="match status" value="1"/>
</dbReference>
<dbReference type="NCBIfam" id="NF010738">
    <property type="entry name" value="PRK14140.1"/>
    <property type="match status" value="1"/>
</dbReference>
<dbReference type="NCBIfam" id="NF010748">
    <property type="entry name" value="PRK14150.1"/>
    <property type="match status" value="1"/>
</dbReference>
<dbReference type="PANTHER" id="PTHR21237">
    <property type="entry name" value="GRPE PROTEIN"/>
    <property type="match status" value="1"/>
</dbReference>
<dbReference type="PANTHER" id="PTHR21237:SF23">
    <property type="entry name" value="GRPE PROTEIN HOMOLOG, MITOCHONDRIAL"/>
    <property type="match status" value="1"/>
</dbReference>
<dbReference type="Pfam" id="PF01025">
    <property type="entry name" value="GrpE"/>
    <property type="match status" value="1"/>
</dbReference>
<dbReference type="PRINTS" id="PR00773">
    <property type="entry name" value="GRPEPROTEIN"/>
</dbReference>
<dbReference type="SUPFAM" id="SSF58014">
    <property type="entry name" value="Coiled-coil domain of nucleotide exchange factor GrpE"/>
    <property type="match status" value="1"/>
</dbReference>
<dbReference type="SUPFAM" id="SSF51064">
    <property type="entry name" value="Head domain of nucleotide exchange factor GrpE"/>
    <property type="match status" value="1"/>
</dbReference>
<dbReference type="PROSITE" id="PS01071">
    <property type="entry name" value="GRPE"/>
    <property type="match status" value="1"/>
</dbReference>